<feature type="chain" id="PRO_0000432902" description="Tail tip protein L">
    <location>
        <begin position="1"/>
        <end position="251"/>
    </location>
</feature>
<feature type="binding site" evidence="2">
    <location>
        <position position="184"/>
    </location>
    <ligand>
        <name>[4Fe-4S] cluster</name>
        <dbReference type="ChEBI" id="CHEBI:49883"/>
    </ligand>
</feature>
<feature type="binding site" evidence="2">
    <location>
        <position position="198"/>
    </location>
    <ligand>
        <name>[4Fe-4S] cluster</name>
        <dbReference type="ChEBI" id="CHEBI:49883"/>
    </ligand>
</feature>
<feature type="binding site" evidence="2">
    <location>
        <position position="221"/>
    </location>
    <ligand>
        <name>[4Fe-4S] cluster</name>
        <dbReference type="ChEBI" id="CHEBI:49883"/>
    </ligand>
</feature>
<feature type="binding site" evidence="2">
    <location>
        <position position="228"/>
    </location>
    <ligand>
        <name>[4Fe-4S] cluster</name>
        <dbReference type="ChEBI" id="CHEBI:49883"/>
    </ligand>
</feature>
<accession>O64332</accession>
<gene>
    <name evidence="5" type="primary">gene 18</name>
</gene>
<reference key="1">
    <citation type="journal article" date="2000" name="J. Mol. Biol.">
        <title>Genomic sequence and analysis of the atypical temperate bacteriophage N15.</title>
        <authorList>
            <person name="Ravin V."/>
            <person name="Ravin N."/>
            <person name="Casjens S."/>
            <person name="Ford M.E."/>
            <person name="Hatfull G.F."/>
            <person name="Hendrix R.W."/>
        </authorList>
    </citation>
    <scope>NUCLEOTIDE SEQUENCE [LARGE SCALE GENOMIC DNA]</scope>
    <scope>IDENTIFICATION</scope>
</reference>
<reference key="2">
    <citation type="journal article" date="2013" name="J. Mol. Biol.">
        <title>Tail tip proteins related to bacteriophage lambda gpL coordinate an iron-sulfur cluster.</title>
        <authorList>
            <person name="Tam W."/>
            <person name="Pell L.G."/>
            <person name="Bona D."/>
            <person name="Tsai A."/>
            <person name="Dai X.X."/>
            <person name="Edwards A.M."/>
            <person name="Hendrix R.W."/>
            <person name="Maxwell K.L."/>
            <person name="Davidson A.R."/>
        </authorList>
    </citation>
    <scope>DOMAIN</scope>
    <scope>COFACTOR</scope>
</reference>
<keyword id="KW-0004">4Fe-4S</keyword>
<keyword id="KW-1035">Host cytoplasm</keyword>
<keyword id="KW-0408">Iron</keyword>
<keyword id="KW-0411">Iron-sulfur</keyword>
<keyword id="KW-0426">Late protein</keyword>
<keyword id="KW-0479">Metal-binding</keyword>
<keyword id="KW-1185">Reference proteome</keyword>
<keyword id="KW-1171">Viral genome ejection through host cell envelope</keyword>
<keyword id="KW-1243">Viral long flexible tail ejection system</keyword>
<keyword id="KW-1162">Viral penetration into host cytoplasm</keyword>
<keyword id="KW-1188">Viral release from host cell</keyword>
<keyword id="KW-1245">Viral tail assembly</keyword>
<keyword id="KW-1227">Viral tail protein</keyword>
<keyword id="KW-0946">Virion</keyword>
<keyword id="KW-1160">Virus entry into host cell</keyword>
<dbReference type="EMBL" id="AF064539">
    <property type="protein sequence ID" value="AAC19054.1"/>
    <property type="molecule type" value="Genomic_DNA"/>
</dbReference>
<dbReference type="PIR" id="T13104">
    <property type="entry name" value="T13104"/>
</dbReference>
<dbReference type="RefSeq" id="NP_046913.1">
    <property type="nucleotide sequence ID" value="NC_001901.1"/>
</dbReference>
<dbReference type="SMR" id="O64332"/>
<dbReference type="GeneID" id="1261657"/>
<dbReference type="KEGG" id="vg:1261657"/>
<dbReference type="Proteomes" id="UP000002132">
    <property type="component" value="Genome"/>
</dbReference>
<dbReference type="GO" id="GO:0030430">
    <property type="term" value="C:host cell cytoplasm"/>
    <property type="evidence" value="ECO:0007669"/>
    <property type="project" value="UniProtKB-SubCell"/>
</dbReference>
<dbReference type="GO" id="GO:0098015">
    <property type="term" value="C:virus tail"/>
    <property type="evidence" value="ECO:0007669"/>
    <property type="project" value="UniProtKB-KW"/>
</dbReference>
<dbReference type="GO" id="GO:0051539">
    <property type="term" value="F:4 iron, 4 sulfur cluster binding"/>
    <property type="evidence" value="ECO:0000314"/>
    <property type="project" value="UniProtKB"/>
</dbReference>
<dbReference type="GO" id="GO:0046872">
    <property type="term" value="F:metal ion binding"/>
    <property type="evidence" value="ECO:0007669"/>
    <property type="project" value="UniProtKB-KW"/>
</dbReference>
<dbReference type="GO" id="GO:0099001">
    <property type="term" value="P:symbiont genome ejection through host cell envelope, long flexible tail mechanism"/>
    <property type="evidence" value="ECO:0007669"/>
    <property type="project" value="UniProtKB-KW"/>
</dbReference>
<dbReference type="GO" id="GO:0098003">
    <property type="term" value="P:viral tail assembly"/>
    <property type="evidence" value="ECO:0007669"/>
    <property type="project" value="UniProtKB-KW"/>
</dbReference>
<dbReference type="InterPro" id="IPR006487">
    <property type="entry name" value="Phage_lambda_L"/>
</dbReference>
<dbReference type="NCBIfam" id="TIGR01600">
    <property type="entry name" value="phage_tail_L"/>
    <property type="match status" value="1"/>
</dbReference>
<dbReference type="Pfam" id="PF05100">
    <property type="entry name" value="Phage_tail_L"/>
    <property type="match status" value="1"/>
</dbReference>
<sequence>MSLNADYQKLEPGNEVRLFSVDGTAFGMSDVLRFHAHNIAHTPEEIEAAGGDENKLPAKSIWWQGEEYKAWPCQVEGIEATTDGTSPQPKLTVANLDSSISALCLAYDDLLQAKVTIHDTLAKYLDARNFPQGNPTADPSQEKLKVFYIDARNTETDEVVEFILSSPMDLQGRMIPTRQLHSLCSWCIRNKYRTGDGCDYAGTRYFDKHNNPVDDPSLDECNGTLTACKLRHGDSNELPFGGFPGTSLIRS</sequence>
<evidence type="ECO:0000250" key="1">
    <source>
        <dbReference type="UniProtKB" id="P03738"/>
    </source>
</evidence>
<evidence type="ECO:0000269" key="2">
    <source>
    </source>
</evidence>
<evidence type="ECO:0000303" key="3">
    <source>
    </source>
</evidence>
<evidence type="ECO:0000305" key="4"/>
<evidence type="ECO:0000312" key="5">
    <source>
        <dbReference type="EMBL" id="AAC19054.1"/>
    </source>
</evidence>
<evidence type="ECO:0000312" key="6">
    <source>
        <dbReference type="Proteomes" id="UP000002132"/>
    </source>
</evidence>
<proteinExistence type="inferred from homology"/>
<protein>
    <recommendedName>
        <fullName evidence="3">Tail tip protein L</fullName>
    </recommendedName>
    <alternativeName>
        <fullName evidence="4">Gene product 18</fullName>
        <shortName evidence="4">gp18</shortName>
    </alternativeName>
</protein>
<organism evidence="6">
    <name type="scientific">Escherichia phage N15</name>
    <name type="common">Bacteriophage N15</name>
    <dbReference type="NCBI Taxonomy" id="1604876"/>
    <lineage>
        <taxon>Viruses</taxon>
        <taxon>Duplodnaviria</taxon>
        <taxon>Heunggongvirae</taxon>
        <taxon>Uroviricota</taxon>
        <taxon>Caudoviricetes</taxon>
        <taxon>Ravinvirus</taxon>
        <taxon>Ravinvirus N15</taxon>
    </lineage>
</organism>
<name>TIPL_BPN15</name>
<comment type="function">
    <text evidence="1">Part of the distal tail tip complex which plays a role in DNA injection during entry, and in tail assembly initiation during exit. The tail tip complex is assembled successively with three tail central fiber proteins J, one tail tip protein I, one tail tip protein L and one tail tip protein K. The tail tip complex interacts with tail measure protein to initiate tail tube assembly. The formation of the tail tip complex is completed by the addition of tail tip protein M, which is followed by tail tube polymerization.</text>
</comment>
<comment type="cofactor">
    <cofactor evidence="2">
        <name>[4Fe-4S] cluster</name>
        <dbReference type="ChEBI" id="CHEBI:49883"/>
    </cofactor>
    <text>Binds 1 [4Fe-4S] cluster.</text>
</comment>
<comment type="subcellular location">
    <subcellularLocation>
        <location evidence="1">Virion</location>
    </subcellularLocation>
    <subcellularLocation>
        <location evidence="1">Host cytoplasm</location>
    </subcellularLocation>
</comment>
<comment type="domain">
    <text evidence="2">The C-terminus coordinates an iron-sulfur cluster.</text>
</comment>
<comment type="similarity">
    <text evidence="4">Belongs to the lambda-like tail tip protein L family.</text>
</comment>
<organismHost>
    <name type="scientific">Escherichia coli</name>
    <dbReference type="NCBI Taxonomy" id="562"/>
</organismHost>